<proteinExistence type="evidence at transcript level"/>
<protein>
    <recommendedName>
        <fullName>Vacuolar protein sorting-associated protein 26</fullName>
    </recommendedName>
</protein>
<sequence>MNFFSNNFGTPCNVEFELDNCQNRKTIEVTQDKGKTEKLFVFIGNEPVSGKVSINIKEKTKKIEHTGIRVEFVGQIELFYDRGNHYEFTSLVRELAPAGELTENKTFSYDFSNVEKQYESYNGTNVRLRYFVRLTIGRSFASNIVKEYDIWVINFVKPPESNSNIKMEVGIEDCLHIEFEYNKSKYHLKDVIIGKIYFLLVRIKIKYMEIALIKRESTGSGPNVFNESETLTKFEIMDGAPVRGESIPVRLFLSVFDLTPTYRSVHNKFSVKYFLNLALVDEDDKKYFKQQEITLWRRGVTKPGLPGSTNNNNNNNTSNTNNTNTPQQKVTESQNEVPEPENNSSDESD</sequence>
<feature type="chain" id="PRO_0000328099" description="Vacuolar protein sorting-associated protein 26">
    <location>
        <begin position="1"/>
        <end position="349"/>
    </location>
</feature>
<feature type="region of interest" description="Disordered" evidence="2">
    <location>
        <begin position="299"/>
        <end position="349"/>
    </location>
</feature>
<feature type="compositionally biased region" description="Low complexity" evidence="2">
    <location>
        <begin position="308"/>
        <end position="325"/>
    </location>
</feature>
<feature type="compositionally biased region" description="Polar residues" evidence="2">
    <location>
        <begin position="326"/>
        <end position="343"/>
    </location>
</feature>
<feature type="sequence conflict" description="In Ref. 1; AAB03668." evidence="3" ref="1">
    <original>KI</original>
    <variation>NF</variation>
    <location>
        <begin position="195"/>
        <end position="196"/>
    </location>
</feature>
<gene>
    <name type="primary">vps26</name>
    <name type="synonym">pepA</name>
    <name type="synonym">rcdQ</name>
    <name type="synonym">veg152</name>
    <name type="ORF">DDB_G0269168</name>
</gene>
<keyword id="KW-0472">Membrane</keyword>
<keyword id="KW-0653">Protein transport</keyword>
<keyword id="KW-1185">Reference proteome</keyword>
<keyword id="KW-0813">Transport</keyword>
<reference key="1">
    <citation type="journal article" date="1996" name="Proc. Natl. Acad. Sci. U.S.A.">
        <title>Ordered yeast artificial chromosome clones representing the Dictyostelium discoideum genome.</title>
        <authorList>
            <person name="Kuspa A."/>
            <person name="Loomis W.F."/>
        </authorList>
    </citation>
    <scope>NUCLEOTIDE SEQUENCE [LARGE SCALE MRNA]</scope>
    <source>
        <strain>AX4</strain>
    </source>
</reference>
<reference key="2">
    <citation type="journal article" date="2005" name="Nature">
        <title>The genome of the social amoeba Dictyostelium discoideum.</title>
        <authorList>
            <person name="Eichinger L."/>
            <person name="Pachebat J.A."/>
            <person name="Gloeckner G."/>
            <person name="Rajandream M.A."/>
            <person name="Sucgang R."/>
            <person name="Berriman M."/>
            <person name="Song J."/>
            <person name="Olsen R."/>
            <person name="Szafranski K."/>
            <person name="Xu Q."/>
            <person name="Tunggal B."/>
            <person name="Kummerfeld S."/>
            <person name="Madera M."/>
            <person name="Konfortov B.A."/>
            <person name="Rivero F."/>
            <person name="Bankier A.T."/>
            <person name="Lehmann R."/>
            <person name="Hamlin N."/>
            <person name="Davies R."/>
            <person name="Gaudet P."/>
            <person name="Fey P."/>
            <person name="Pilcher K."/>
            <person name="Chen G."/>
            <person name="Saunders D."/>
            <person name="Sodergren E.J."/>
            <person name="Davis P."/>
            <person name="Kerhornou A."/>
            <person name="Nie X."/>
            <person name="Hall N."/>
            <person name="Anjard C."/>
            <person name="Hemphill L."/>
            <person name="Bason N."/>
            <person name="Farbrother P."/>
            <person name="Desany B."/>
            <person name="Just E."/>
            <person name="Morio T."/>
            <person name="Rost R."/>
            <person name="Churcher C.M."/>
            <person name="Cooper J."/>
            <person name="Haydock S."/>
            <person name="van Driessche N."/>
            <person name="Cronin A."/>
            <person name="Goodhead I."/>
            <person name="Muzny D.M."/>
            <person name="Mourier T."/>
            <person name="Pain A."/>
            <person name="Lu M."/>
            <person name="Harper D."/>
            <person name="Lindsay R."/>
            <person name="Hauser H."/>
            <person name="James K.D."/>
            <person name="Quiles M."/>
            <person name="Madan Babu M."/>
            <person name="Saito T."/>
            <person name="Buchrieser C."/>
            <person name="Wardroper A."/>
            <person name="Felder M."/>
            <person name="Thangavelu M."/>
            <person name="Johnson D."/>
            <person name="Knights A."/>
            <person name="Loulseged H."/>
            <person name="Mungall K.L."/>
            <person name="Oliver K."/>
            <person name="Price C."/>
            <person name="Quail M.A."/>
            <person name="Urushihara H."/>
            <person name="Hernandez J."/>
            <person name="Rabbinowitsch E."/>
            <person name="Steffen D."/>
            <person name="Sanders M."/>
            <person name="Ma J."/>
            <person name="Kohara Y."/>
            <person name="Sharp S."/>
            <person name="Simmonds M.N."/>
            <person name="Spiegler S."/>
            <person name="Tivey A."/>
            <person name="Sugano S."/>
            <person name="White B."/>
            <person name="Walker D."/>
            <person name="Woodward J.R."/>
            <person name="Winckler T."/>
            <person name="Tanaka Y."/>
            <person name="Shaulsky G."/>
            <person name="Schleicher M."/>
            <person name="Weinstock G.M."/>
            <person name="Rosenthal A."/>
            <person name="Cox E.C."/>
            <person name="Chisholm R.L."/>
            <person name="Gibbs R.A."/>
            <person name="Loomis W.F."/>
            <person name="Platzer M."/>
            <person name="Kay R.R."/>
            <person name="Williams J.G."/>
            <person name="Dear P.H."/>
            <person name="Noegel A.A."/>
            <person name="Barrell B.G."/>
            <person name="Kuspa A."/>
        </authorList>
    </citation>
    <scope>NUCLEOTIDE SEQUENCE [LARGE SCALE GENOMIC DNA]</scope>
    <source>
        <strain>AX4</strain>
    </source>
</reference>
<evidence type="ECO:0000250" key="1"/>
<evidence type="ECO:0000256" key="2">
    <source>
        <dbReference type="SAM" id="MobiDB-lite"/>
    </source>
</evidence>
<evidence type="ECO:0000305" key="3"/>
<comment type="function">
    <text evidence="1">Plays a role in vesicular protein sorting. Component of the membrane-associated retromer complex which is essential in endosome-to-Golgi retrograde transport. The vps29-vps26-vps35 subcomplex may be involved in cargo selection.</text>
</comment>
<comment type="subunit">
    <text evidence="1">Component of a retromer subcomplex consisting of vps29, vps26 and vps35.</text>
</comment>
<comment type="subcellular location">
    <subcellularLocation>
        <location evidence="1">Membrane</location>
        <topology evidence="1">Peripheral membrane protein</topology>
        <orientation evidence="1">Cytoplasmic side</orientation>
    </subcellularLocation>
</comment>
<comment type="similarity">
    <text evidence="3">Belongs to the VPS26 family.</text>
</comment>
<organism>
    <name type="scientific">Dictyostelium discoideum</name>
    <name type="common">Social amoeba</name>
    <dbReference type="NCBI Taxonomy" id="44689"/>
    <lineage>
        <taxon>Eukaryota</taxon>
        <taxon>Amoebozoa</taxon>
        <taxon>Evosea</taxon>
        <taxon>Eumycetozoa</taxon>
        <taxon>Dictyostelia</taxon>
        <taxon>Dictyosteliales</taxon>
        <taxon>Dictyosteliaceae</taxon>
        <taxon>Dictyostelium</taxon>
    </lineage>
</organism>
<name>VPS26_DICDI</name>
<dbReference type="EMBL" id="U61985">
    <property type="protein sequence ID" value="AAB03668.1"/>
    <property type="molecule type" value="mRNA"/>
</dbReference>
<dbReference type="EMBL" id="AAFI02000005">
    <property type="protein sequence ID" value="EAL71934.1"/>
    <property type="molecule type" value="Genomic_DNA"/>
</dbReference>
<dbReference type="RefSeq" id="XP_646581.1">
    <property type="nucleotide sequence ID" value="XM_641489.1"/>
</dbReference>
<dbReference type="SMR" id="Q55CA0"/>
<dbReference type="FunCoup" id="Q55CA0">
    <property type="interactions" value="852"/>
</dbReference>
<dbReference type="STRING" id="44689.Q55CA0"/>
<dbReference type="PaxDb" id="44689-DDB0191205"/>
<dbReference type="EnsemblProtists" id="EAL71934">
    <property type="protein sequence ID" value="EAL71934"/>
    <property type="gene ID" value="DDB_G0269168"/>
</dbReference>
<dbReference type="GeneID" id="8617551"/>
<dbReference type="KEGG" id="ddi:DDB_G0269168"/>
<dbReference type="dictyBase" id="DDB_G0269168">
    <property type="gene designation" value="vps26"/>
</dbReference>
<dbReference type="VEuPathDB" id="AmoebaDB:DDB_G0269168"/>
<dbReference type="eggNOG" id="KOG3063">
    <property type="taxonomic scope" value="Eukaryota"/>
</dbReference>
<dbReference type="HOGENOM" id="CLU_031077_0_0_1"/>
<dbReference type="InParanoid" id="Q55CA0"/>
<dbReference type="OMA" id="FKWKFSS"/>
<dbReference type="PhylomeDB" id="Q55CA0"/>
<dbReference type="Reactome" id="R-DDI-3238698">
    <property type="pathway name" value="WNT ligand biogenesis and trafficking"/>
</dbReference>
<dbReference type="PRO" id="PR:Q55CA0"/>
<dbReference type="Proteomes" id="UP000002195">
    <property type="component" value="Chromosome 1"/>
</dbReference>
<dbReference type="GO" id="GO:0005829">
    <property type="term" value="C:cytosol"/>
    <property type="evidence" value="ECO:0007669"/>
    <property type="project" value="GOC"/>
</dbReference>
<dbReference type="GO" id="GO:0005768">
    <property type="term" value="C:endosome"/>
    <property type="evidence" value="ECO:0000318"/>
    <property type="project" value="GO_Central"/>
</dbReference>
<dbReference type="GO" id="GO:0140220">
    <property type="term" value="C:pathogen-containing vacuole"/>
    <property type="evidence" value="ECO:0000314"/>
    <property type="project" value="dictyBase"/>
</dbReference>
<dbReference type="GO" id="GO:0030904">
    <property type="term" value="C:retromer complex"/>
    <property type="evidence" value="ECO:0000250"/>
    <property type="project" value="dictyBase"/>
</dbReference>
<dbReference type="GO" id="GO:0006886">
    <property type="term" value="P:intracellular protein transport"/>
    <property type="evidence" value="ECO:0000318"/>
    <property type="project" value="GO_Central"/>
</dbReference>
<dbReference type="GO" id="GO:0045053">
    <property type="term" value="P:protein retention in Golgi apparatus"/>
    <property type="evidence" value="ECO:0000250"/>
    <property type="project" value="dictyBase"/>
</dbReference>
<dbReference type="GO" id="GO:0042147">
    <property type="term" value="P:retrograde transport, endosome to Golgi"/>
    <property type="evidence" value="ECO:0000250"/>
    <property type="project" value="dictyBase"/>
</dbReference>
<dbReference type="FunFam" id="2.60.40.640:FF:000010">
    <property type="entry name" value="Vacuolar protein sorting-associated protein 26"/>
    <property type="match status" value="1"/>
</dbReference>
<dbReference type="FunFam" id="2.60.40.640:FF:000001">
    <property type="entry name" value="Vacuolar protein sorting-associated protein 26A"/>
    <property type="match status" value="1"/>
</dbReference>
<dbReference type="Gene3D" id="2.60.40.640">
    <property type="match status" value="2"/>
</dbReference>
<dbReference type="InterPro" id="IPR014752">
    <property type="entry name" value="Arrestin-like_C"/>
</dbReference>
<dbReference type="InterPro" id="IPR028934">
    <property type="entry name" value="Vps26-related"/>
</dbReference>
<dbReference type="PANTHER" id="PTHR12233">
    <property type="entry name" value="VACUOLAR PROTEIN SORTING 26 RELATED"/>
    <property type="match status" value="1"/>
</dbReference>
<dbReference type="Pfam" id="PF03643">
    <property type="entry name" value="Vps26"/>
    <property type="match status" value="1"/>
</dbReference>
<accession>Q55CA0</accession>
<accession>Q23920</accession>